<accession>P07895</accession>
<protein>
    <recommendedName>
        <fullName>Superoxide dismutase [Mn], mitochondrial</fullName>
        <ecNumber>1.15.1.1</ecNumber>
    </recommendedName>
</protein>
<name>SODM_RAT</name>
<proteinExistence type="evidence at protein level"/>
<comment type="function">
    <text evidence="4">Destroys superoxide anion radicals which are normally produced within the cells and which are toxic to biological systems.</text>
</comment>
<comment type="catalytic activity">
    <reaction>
        <text>2 superoxide + 2 H(+) = H2O2 + O2</text>
        <dbReference type="Rhea" id="RHEA:20696"/>
        <dbReference type="ChEBI" id="CHEBI:15378"/>
        <dbReference type="ChEBI" id="CHEBI:15379"/>
        <dbReference type="ChEBI" id="CHEBI:16240"/>
        <dbReference type="ChEBI" id="CHEBI:18421"/>
        <dbReference type="EC" id="1.15.1.1"/>
    </reaction>
</comment>
<comment type="cofactor">
    <cofactor evidence="2">
        <name>Mn(2+)</name>
        <dbReference type="ChEBI" id="CHEBI:29035"/>
    </cofactor>
    <text evidence="2">Binds 1 Mn(2+) ion per subunit.</text>
</comment>
<comment type="subunit">
    <text>Homotetramer.</text>
</comment>
<comment type="subcellular location">
    <subcellularLocation>
        <location>Mitochondrion matrix</location>
    </subcellularLocation>
</comment>
<comment type="PTM">
    <text evidence="4 5">Nitrated under oxidative stress. Nitration coupled with oxidation inhibits the catalytic activity.</text>
</comment>
<comment type="PTM">
    <text evidence="2">Acetylation at Lys-122 decreases enzymatic activity. Deacetylated by SIRT3 upon exposure to ionizing radiations or after long fasting (By similarity).</text>
</comment>
<comment type="PTM">
    <text evidence="2">Polyubiquitinated; leading to proteasomal degradation. Deubiquitinated by USP36 which increases protein stability.</text>
</comment>
<comment type="similarity">
    <text evidence="6">Belongs to the iron/manganese superoxide dismutase family.</text>
</comment>
<organism>
    <name type="scientific">Rattus norvegicus</name>
    <name type="common">Rat</name>
    <dbReference type="NCBI Taxonomy" id="10116"/>
    <lineage>
        <taxon>Eukaryota</taxon>
        <taxon>Metazoa</taxon>
        <taxon>Chordata</taxon>
        <taxon>Craniata</taxon>
        <taxon>Vertebrata</taxon>
        <taxon>Euteleostomi</taxon>
        <taxon>Mammalia</taxon>
        <taxon>Eutheria</taxon>
        <taxon>Euarchontoglires</taxon>
        <taxon>Glires</taxon>
        <taxon>Rodentia</taxon>
        <taxon>Myomorpha</taxon>
        <taxon>Muroidea</taxon>
        <taxon>Muridae</taxon>
        <taxon>Murinae</taxon>
        <taxon>Rattus</taxon>
    </lineage>
</organism>
<keyword id="KW-0007">Acetylation</keyword>
<keyword id="KW-0903">Direct protein sequencing</keyword>
<keyword id="KW-0464">Manganese</keyword>
<keyword id="KW-0479">Metal-binding</keyword>
<keyword id="KW-0496">Mitochondrion</keyword>
<keyword id="KW-0944">Nitration</keyword>
<keyword id="KW-0560">Oxidoreductase</keyword>
<keyword id="KW-1185">Reference proteome</keyword>
<keyword id="KW-0809">Transit peptide</keyword>
<keyword id="KW-0832">Ubl conjugation</keyword>
<evidence type="ECO:0000250" key="1"/>
<evidence type="ECO:0000250" key="2">
    <source>
        <dbReference type="UniProtKB" id="P04179"/>
    </source>
</evidence>
<evidence type="ECO:0000250" key="3">
    <source>
        <dbReference type="UniProtKB" id="P09671"/>
    </source>
</evidence>
<evidence type="ECO:0000269" key="4">
    <source>
    </source>
</evidence>
<evidence type="ECO:0000269" key="5">
    <source>
    </source>
</evidence>
<evidence type="ECO:0000305" key="6"/>
<gene>
    <name type="primary">Sod2</name>
</gene>
<reference key="1">
    <citation type="journal article" date="1987" name="Nucleic Acids Res.">
        <title>Nucleotide sequences of cDNAs coding for rat manganese-containing superoxide dismutase.</title>
        <authorList>
            <person name="Ho Y.-S."/>
            <person name="Crapo J.D."/>
        </authorList>
    </citation>
    <scope>NUCLEOTIDE SEQUENCE [MRNA]</scope>
    <source>
        <strain>Sprague-Dawley</strain>
        <tissue>Liver</tissue>
    </source>
</reference>
<reference key="2">
    <citation type="journal article" date="1991" name="Am. J. Respir. Cell Mol. Biol.">
        <title>Molecular structure of a functional rat gene for manganese-containing superoxide dismutase.</title>
        <authorList>
            <person name="Ho Y.-S."/>
            <person name="Howard A.J."/>
            <person name="Crapo J.D."/>
        </authorList>
    </citation>
    <scope>NUCLEOTIDE SEQUENCE [GENOMIC DNA]</scope>
    <source>
        <strain>Sprague-Dawley</strain>
        <tissue>Liver</tissue>
    </source>
</reference>
<reference key="3">
    <citation type="journal article" date="2004" name="Genome Res.">
        <title>The status, quality, and expansion of the NIH full-length cDNA project: the Mammalian Gene Collection (MGC).</title>
        <authorList>
            <consortium name="The MGC Project Team"/>
        </authorList>
    </citation>
    <scope>NUCLEOTIDE SEQUENCE [LARGE SCALE MRNA]</scope>
    <source>
        <tissue>Heart</tissue>
    </source>
</reference>
<reference key="4">
    <citation type="submission" date="2007-07" db="UniProtKB">
        <authorList>
            <person name="Lubec G."/>
            <person name="Afjehi-Sadat L."/>
            <person name="Diao W."/>
            <person name="Kang S.U."/>
        </authorList>
    </citation>
    <scope>PROTEIN SEQUENCE OF 54-68; 76-108; 135-154 AND 203-216</scope>
    <scope>IDENTIFICATION BY MASS SPECTROMETRY</scope>
    <source>
        <strain>Sprague-Dawley</strain>
        <tissue>Brain</tissue>
        <tissue>Hippocampus</tissue>
        <tissue>Spinal cord</tissue>
    </source>
</reference>
<reference key="5">
    <citation type="journal article" date="2003" name="Am. J. Physiol.">
        <title>Quantitative assessment of tyrosine nitration of manganese superoxide dismutase in angiotensin II-infused rat kidney.</title>
        <authorList>
            <person name="Guo W."/>
            <person name="Adachi T."/>
            <person name="Matsui R."/>
            <person name="Xu S."/>
            <person name="Jiang B."/>
            <person name="Zou M.H."/>
            <person name="Kirber M."/>
            <person name="Lieberthal W."/>
            <person name="Cohen R.A."/>
        </authorList>
    </citation>
    <scope>NITRATION</scope>
    <scope>FUNCTION DURING OXIDATIVE STRESS</scope>
</reference>
<reference key="6">
    <citation type="journal article" date="2006" name="Am. J. Physiol.">
        <title>Detection of sequence-specific tyrosine nitration of manganese SOD and SERCA in cardiovascular disease and aging.</title>
        <authorList>
            <person name="Xu S."/>
            <person name="Ying J."/>
            <person name="Jiang B."/>
            <person name="Guo W."/>
            <person name="Adachi T."/>
            <person name="Sharov V."/>
            <person name="Lazar H."/>
            <person name="Menzoian J."/>
            <person name="Knyushko T.V."/>
            <person name="Bigelow D."/>
            <person name="Schoeneich C."/>
            <person name="Cohen R.A."/>
        </authorList>
    </citation>
    <scope>NITRATION AT TYR-58</scope>
</reference>
<sequence length="222" mass="24674">MLCRAACSAGRRLGPAASTAGSRHKHSLPDLPYDYGALEPHINAQIMQLHHSKHHATYVNNLNVTEEKYHEALAKGDVTTQVALQPALKFNGGGHINHSIFWTNLSPKGGGEPKGELLEAIKRDFGSFEKFKEKLTAVSVGVQGSGWGWLGFNKEQGRLQIAACSNQDPLQGTTGLIPLLGIDVWEHAYYLQYKNVRPDYLKAIWNVINWENVSQRYIVCKK</sequence>
<dbReference type="EC" id="1.15.1.1"/>
<dbReference type="EMBL" id="Y00497">
    <property type="protein sequence ID" value="CAA68549.1"/>
    <property type="molecule type" value="mRNA"/>
</dbReference>
<dbReference type="EMBL" id="X56600">
    <property type="protein sequence ID" value="CAA39937.1"/>
    <property type="molecule type" value="Genomic_DNA"/>
</dbReference>
<dbReference type="EMBL" id="BC070913">
    <property type="protein sequence ID" value="AAH70913.1"/>
    <property type="molecule type" value="mRNA"/>
</dbReference>
<dbReference type="PIR" id="S21661">
    <property type="entry name" value="DSRTN"/>
</dbReference>
<dbReference type="RefSeq" id="NP_058747.1">
    <property type="nucleotide sequence ID" value="NM_017051.2"/>
</dbReference>
<dbReference type="SMR" id="P07895"/>
<dbReference type="BioGRID" id="246911">
    <property type="interactions" value="1"/>
</dbReference>
<dbReference type="FunCoup" id="P07895">
    <property type="interactions" value="1417"/>
</dbReference>
<dbReference type="IntAct" id="P07895">
    <property type="interactions" value="1"/>
</dbReference>
<dbReference type="STRING" id="10116.ENSRNOP00000025794"/>
<dbReference type="GlyGen" id="P07895">
    <property type="glycosylation" value="1 site, 1 O-linked glycan (1 site)"/>
</dbReference>
<dbReference type="iPTMnet" id="P07895"/>
<dbReference type="PhosphoSitePlus" id="P07895"/>
<dbReference type="SwissPalm" id="P07895"/>
<dbReference type="jPOST" id="P07895"/>
<dbReference type="PaxDb" id="10116-ENSRNOP00000025794"/>
<dbReference type="Ensembl" id="ENSRNOT00000025794.5">
    <property type="protein sequence ID" value="ENSRNOP00000025794.3"/>
    <property type="gene ID" value="ENSRNOG00000019048.5"/>
</dbReference>
<dbReference type="GeneID" id="24787"/>
<dbReference type="KEGG" id="rno:24787"/>
<dbReference type="AGR" id="RGD:3732"/>
<dbReference type="CTD" id="6648"/>
<dbReference type="RGD" id="3732">
    <property type="gene designation" value="Sod2"/>
</dbReference>
<dbReference type="eggNOG" id="KOG0876">
    <property type="taxonomic scope" value="Eukaryota"/>
</dbReference>
<dbReference type="GeneTree" id="ENSGT00390000011877"/>
<dbReference type="HOGENOM" id="CLU_031625_2_1_1"/>
<dbReference type="InParanoid" id="P07895"/>
<dbReference type="OMA" id="DSLINWD"/>
<dbReference type="OrthoDB" id="239262at2759"/>
<dbReference type="PhylomeDB" id="P07895"/>
<dbReference type="TreeFam" id="TF105132"/>
<dbReference type="BRENDA" id="1.15.1.1">
    <property type="organism ID" value="5301"/>
</dbReference>
<dbReference type="Reactome" id="R-RNO-2151201">
    <property type="pathway name" value="Transcriptional activation of mitochondrial biogenesis"/>
</dbReference>
<dbReference type="Reactome" id="R-RNO-3299685">
    <property type="pathway name" value="Detoxification of Reactive Oxygen Species"/>
</dbReference>
<dbReference type="PRO" id="PR:P07895"/>
<dbReference type="Proteomes" id="UP000002494">
    <property type="component" value="Chromosome 1"/>
</dbReference>
<dbReference type="Bgee" id="ENSRNOG00000019048">
    <property type="expression patterns" value="Expressed in heart and 19 other cell types or tissues"/>
</dbReference>
<dbReference type="GO" id="GO:0005759">
    <property type="term" value="C:mitochondrial matrix"/>
    <property type="evidence" value="ECO:0000266"/>
    <property type="project" value="RGD"/>
</dbReference>
<dbReference type="GO" id="GO:0042645">
    <property type="term" value="C:mitochondrial nucleoid"/>
    <property type="evidence" value="ECO:0000314"/>
    <property type="project" value="RGD"/>
</dbReference>
<dbReference type="GO" id="GO:0005739">
    <property type="term" value="C:mitochondrion"/>
    <property type="evidence" value="ECO:0000266"/>
    <property type="project" value="RGD"/>
</dbReference>
<dbReference type="GO" id="GO:0003677">
    <property type="term" value="F:DNA binding"/>
    <property type="evidence" value="ECO:0000314"/>
    <property type="project" value="RGD"/>
</dbReference>
<dbReference type="GO" id="GO:0019899">
    <property type="term" value="F:enzyme binding"/>
    <property type="evidence" value="ECO:0000353"/>
    <property type="project" value="RGD"/>
</dbReference>
<dbReference type="GO" id="GO:0042802">
    <property type="term" value="F:identical protein binding"/>
    <property type="evidence" value="ECO:0000353"/>
    <property type="project" value="RGD"/>
</dbReference>
<dbReference type="GO" id="GO:0030145">
    <property type="term" value="F:manganese ion binding"/>
    <property type="evidence" value="ECO:0000314"/>
    <property type="project" value="RGD"/>
</dbReference>
<dbReference type="GO" id="GO:0016491">
    <property type="term" value="F:oxidoreductase activity"/>
    <property type="evidence" value="ECO:0000266"/>
    <property type="project" value="RGD"/>
</dbReference>
<dbReference type="GO" id="GO:0019825">
    <property type="term" value="F:oxygen binding"/>
    <property type="evidence" value="ECO:0000314"/>
    <property type="project" value="RGD"/>
</dbReference>
<dbReference type="GO" id="GO:0004784">
    <property type="term" value="F:superoxide dismutase activity"/>
    <property type="evidence" value="ECO:0000314"/>
    <property type="project" value="RGD"/>
</dbReference>
<dbReference type="GO" id="GO:0003069">
    <property type="term" value="P:acetylcholine-mediated vasodilation involved in regulation of systemic arterial blood pressure"/>
    <property type="evidence" value="ECO:0000266"/>
    <property type="project" value="RGD"/>
</dbReference>
<dbReference type="GO" id="GO:0008637">
    <property type="term" value="P:apoptotic mitochondrial changes"/>
    <property type="evidence" value="ECO:0000266"/>
    <property type="project" value="RGD"/>
</dbReference>
<dbReference type="GO" id="GO:0071361">
    <property type="term" value="P:cellular response to ethanol"/>
    <property type="evidence" value="ECO:0000270"/>
    <property type="project" value="RGD"/>
</dbReference>
<dbReference type="GO" id="GO:0034599">
    <property type="term" value="P:cellular response to oxidative stress"/>
    <property type="evidence" value="ECO:0000250"/>
    <property type="project" value="UniProtKB"/>
</dbReference>
<dbReference type="GO" id="GO:0003032">
    <property type="term" value="P:detection of oxygen"/>
    <property type="evidence" value="ECO:0000266"/>
    <property type="project" value="RGD"/>
</dbReference>
<dbReference type="GO" id="GO:0048773">
    <property type="term" value="P:erythrophore differentiation"/>
    <property type="evidence" value="ECO:0000266"/>
    <property type="project" value="RGD"/>
</dbReference>
<dbReference type="GO" id="GO:0006749">
    <property type="term" value="P:glutathione metabolic process"/>
    <property type="evidence" value="ECO:0000266"/>
    <property type="project" value="RGD"/>
</dbReference>
<dbReference type="GO" id="GO:0007507">
    <property type="term" value="P:heart development"/>
    <property type="evidence" value="ECO:0000266"/>
    <property type="project" value="RGD"/>
</dbReference>
<dbReference type="GO" id="GO:0030097">
    <property type="term" value="P:hemopoiesis"/>
    <property type="evidence" value="ECO:0000266"/>
    <property type="project" value="RGD"/>
</dbReference>
<dbReference type="GO" id="GO:0050665">
    <property type="term" value="P:hydrogen peroxide biosynthetic process"/>
    <property type="evidence" value="ECO:0000314"/>
    <property type="project" value="RGD"/>
</dbReference>
<dbReference type="GO" id="GO:0042743">
    <property type="term" value="P:hydrogen peroxide metabolic process"/>
    <property type="evidence" value="ECO:0000315"/>
    <property type="project" value="RGD"/>
</dbReference>
<dbReference type="GO" id="GO:0032364">
    <property type="term" value="P:intracellular oxygen homeostasis"/>
    <property type="evidence" value="ECO:0000266"/>
    <property type="project" value="RGD"/>
</dbReference>
<dbReference type="GO" id="GO:0008630">
    <property type="term" value="P:intrinsic apoptotic signaling pathway in response to DNA damage"/>
    <property type="evidence" value="ECO:0000266"/>
    <property type="project" value="RGD"/>
</dbReference>
<dbReference type="GO" id="GO:0008631">
    <property type="term" value="P:intrinsic apoptotic signaling pathway in response to oxidative stress"/>
    <property type="evidence" value="ECO:0000266"/>
    <property type="project" value="RGD"/>
</dbReference>
<dbReference type="GO" id="GO:0001889">
    <property type="term" value="P:liver development"/>
    <property type="evidence" value="ECO:0000266"/>
    <property type="project" value="RGD"/>
</dbReference>
<dbReference type="GO" id="GO:0007626">
    <property type="term" value="P:locomotory behavior"/>
    <property type="evidence" value="ECO:0000266"/>
    <property type="project" value="RGD"/>
</dbReference>
<dbReference type="GO" id="GO:0007005">
    <property type="term" value="P:mitochondrion organization"/>
    <property type="evidence" value="ECO:0000266"/>
    <property type="project" value="RGD"/>
</dbReference>
<dbReference type="GO" id="GO:0060586">
    <property type="term" value="P:multicellular organismal-level iron ion homeostasis"/>
    <property type="evidence" value="ECO:0000266"/>
    <property type="project" value="RGD"/>
</dbReference>
<dbReference type="GO" id="GO:0043066">
    <property type="term" value="P:negative regulation of apoptotic process"/>
    <property type="evidence" value="ECO:0000315"/>
    <property type="project" value="RGD"/>
</dbReference>
<dbReference type="GO" id="GO:0008285">
    <property type="term" value="P:negative regulation of cell population proliferation"/>
    <property type="evidence" value="ECO:0000266"/>
    <property type="project" value="RGD"/>
</dbReference>
<dbReference type="GO" id="GO:0045599">
    <property type="term" value="P:negative regulation of fat cell differentiation"/>
    <property type="evidence" value="ECO:0000266"/>
    <property type="project" value="RGD"/>
</dbReference>
<dbReference type="GO" id="GO:0048147">
    <property type="term" value="P:negative regulation of fibroblast proliferation"/>
    <property type="evidence" value="ECO:0000266"/>
    <property type="project" value="RGD"/>
</dbReference>
<dbReference type="GO" id="GO:1902631">
    <property type="term" value="P:negative regulation of membrane hyperpolarization"/>
    <property type="evidence" value="ECO:0000315"/>
    <property type="project" value="RGD"/>
</dbReference>
<dbReference type="GO" id="GO:0043524">
    <property type="term" value="P:negative regulation of neuron apoptotic process"/>
    <property type="evidence" value="ECO:0000266"/>
    <property type="project" value="RGD"/>
</dbReference>
<dbReference type="GO" id="GO:1902176">
    <property type="term" value="P:negative regulation of oxidative stress-induced intrinsic apoptotic signaling pathway"/>
    <property type="evidence" value="ECO:0000266"/>
    <property type="project" value="RGD"/>
</dbReference>
<dbReference type="GO" id="GO:1904706">
    <property type="term" value="P:negative regulation of vascular associated smooth muscle cell proliferation"/>
    <property type="evidence" value="ECO:0000266"/>
    <property type="project" value="RGD"/>
</dbReference>
<dbReference type="GO" id="GO:0048666">
    <property type="term" value="P:neuron development"/>
    <property type="evidence" value="ECO:0000266"/>
    <property type="project" value="RGD"/>
</dbReference>
<dbReference type="GO" id="GO:0030335">
    <property type="term" value="P:positive regulation of cell migration"/>
    <property type="evidence" value="ECO:0000266"/>
    <property type="project" value="RGD"/>
</dbReference>
<dbReference type="GO" id="GO:0010729">
    <property type="term" value="P:positive regulation of hydrogen peroxide biosynthetic process"/>
    <property type="evidence" value="ECO:0000315"/>
    <property type="project" value="RGD"/>
</dbReference>
<dbReference type="GO" id="GO:0045429">
    <property type="term" value="P:positive regulation of nitric oxide biosynthetic process"/>
    <property type="evidence" value="ECO:0000266"/>
    <property type="project" value="RGD"/>
</dbReference>
<dbReference type="GO" id="GO:1905461">
    <property type="term" value="P:positive regulation of vascular associated smooth muscle cell apoptotic process"/>
    <property type="evidence" value="ECO:0000266"/>
    <property type="project" value="RGD"/>
</dbReference>
<dbReference type="GO" id="GO:1905932">
    <property type="term" value="P:positive regulation of vascular associated smooth muscle cell differentiation involved in phenotypic switching"/>
    <property type="evidence" value="ECO:0000266"/>
    <property type="project" value="RGD"/>
</dbReference>
<dbReference type="GO" id="GO:0009791">
    <property type="term" value="P:post-embryonic development"/>
    <property type="evidence" value="ECO:0000266"/>
    <property type="project" value="RGD"/>
</dbReference>
<dbReference type="GO" id="GO:0051289">
    <property type="term" value="P:protein homotetramerization"/>
    <property type="evidence" value="ECO:0000266"/>
    <property type="project" value="RGD"/>
</dbReference>
<dbReference type="GO" id="GO:0008217">
    <property type="term" value="P:regulation of blood pressure"/>
    <property type="evidence" value="ECO:0000266"/>
    <property type="project" value="RGD"/>
</dbReference>
<dbReference type="GO" id="GO:0051881">
    <property type="term" value="P:regulation of mitochondrial membrane potential"/>
    <property type="evidence" value="ECO:0000266"/>
    <property type="project" value="RGD"/>
</dbReference>
<dbReference type="GO" id="GO:0006357">
    <property type="term" value="P:regulation of transcription by RNA polymerase II"/>
    <property type="evidence" value="ECO:0000250"/>
    <property type="project" value="UniProtKB"/>
</dbReference>
<dbReference type="GO" id="GO:0001836">
    <property type="term" value="P:release of cytochrome c from mitochondria"/>
    <property type="evidence" value="ECO:0000266"/>
    <property type="project" value="RGD"/>
</dbReference>
<dbReference type="GO" id="GO:0019430">
    <property type="term" value="P:removal of superoxide radicals"/>
    <property type="evidence" value="ECO:0000314"/>
    <property type="project" value="RGD"/>
</dbReference>
<dbReference type="GO" id="GO:0022904">
    <property type="term" value="P:respiratory electron transport chain"/>
    <property type="evidence" value="ECO:0000266"/>
    <property type="project" value="RGD"/>
</dbReference>
<dbReference type="GO" id="GO:0014823">
    <property type="term" value="P:response to activity"/>
    <property type="evidence" value="ECO:0000270"/>
    <property type="project" value="RGD"/>
</dbReference>
<dbReference type="GO" id="GO:0048678">
    <property type="term" value="P:response to axon injury"/>
    <property type="evidence" value="ECO:0000266"/>
    <property type="project" value="RGD"/>
</dbReference>
<dbReference type="GO" id="GO:0046686">
    <property type="term" value="P:response to cadmium ion"/>
    <property type="evidence" value="ECO:0000270"/>
    <property type="project" value="RGD"/>
</dbReference>
<dbReference type="GO" id="GO:0051602">
    <property type="term" value="P:response to electrical stimulus"/>
    <property type="evidence" value="ECO:0000270"/>
    <property type="project" value="RGD"/>
</dbReference>
<dbReference type="GO" id="GO:0010332">
    <property type="term" value="P:response to gamma radiation"/>
    <property type="evidence" value="ECO:0000266"/>
    <property type="project" value="RGD"/>
</dbReference>
<dbReference type="GO" id="GO:0042542">
    <property type="term" value="P:response to hydrogen peroxide"/>
    <property type="evidence" value="ECO:0000270"/>
    <property type="project" value="RGD"/>
</dbReference>
<dbReference type="GO" id="GO:0055093">
    <property type="term" value="P:response to hyperoxia"/>
    <property type="evidence" value="ECO:0000266"/>
    <property type="project" value="RGD"/>
</dbReference>
<dbReference type="GO" id="GO:0001666">
    <property type="term" value="P:response to hypoxia"/>
    <property type="evidence" value="ECO:0000270"/>
    <property type="project" value="RGD"/>
</dbReference>
<dbReference type="GO" id="GO:0035902">
    <property type="term" value="P:response to immobilization stress"/>
    <property type="evidence" value="ECO:0000270"/>
    <property type="project" value="RGD"/>
</dbReference>
<dbReference type="GO" id="GO:0035900">
    <property type="term" value="P:response to isolation stress"/>
    <property type="evidence" value="ECO:0000270"/>
    <property type="project" value="RGD"/>
</dbReference>
<dbReference type="GO" id="GO:0033591">
    <property type="term" value="P:response to L-ascorbic acid"/>
    <property type="evidence" value="ECO:0000270"/>
    <property type="project" value="RGD"/>
</dbReference>
<dbReference type="GO" id="GO:0032496">
    <property type="term" value="P:response to lipopolysaccharide"/>
    <property type="evidence" value="ECO:0000270"/>
    <property type="project" value="RGD"/>
</dbReference>
<dbReference type="GO" id="GO:0071000">
    <property type="term" value="P:response to magnetism"/>
    <property type="evidence" value="ECO:0000270"/>
    <property type="project" value="RGD"/>
</dbReference>
<dbReference type="GO" id="GO:0010042">
    <property type="term" value="P:response to manganese ion"/>
    <property type="evidence" value="ECO:0000270"/>
    <property type="project" value="RGD"/>
</dbReference>
<dbReference type="GO" id="GO:0031667">
    <property type="term" value="P:response to nutrient levels"/>
    <property type="evidence" value="ECO:0000314"/>
    <property type="project" value="RGD"/>
</dbReference>
<dbReference type="GO" id="GO:0006979">
    <property type="term" value="P:response to oxidative stress"/>
    <property type="evidence" value="ECO:0000270"/>
    <property type="project" value="RGD"/>
</dbReference>
<dbReference type="GO" id="GO:0000302">
    <property type="term" value="P:response to reactive oxygen species"/>
    <property type="evidence" value="ECO:0000266"/>
    <property type="project" value="RGD"/>
</dbReference>
<dbReference type="GO" id="GO:0010269">
    <property type="term" value="P:response to selenium ion"/>
    <property type="evidence" value="ECO:0000270"/>
    <property type="project" value="RGD"/>
</dbReference>
<dbReference type="GO" id="GO:0034021">
    <property type="term" value="P:response to silicon dioxide"/>
    <property type="evidence" value="ECO:0000270"/>
    <property type="project" value="RGD"/>
</dbReference>
<dbReference type="GO" id="GO:0000303">
    <property type="term" value="P:response to superoxide"/>
    <property type="evidence" value="ECO:0000266"/>
    <property type="project" value="RGD"/>
</dbReference>
<dbReference type="GO" id="GO:0009410">
    <property type="term" value="P:response to xenobiotic stimulus"/>
    <property type="evidence" value="ECO:0000314"/>
    <property type="project" value="RGD"/>
</dbReference>
<dbReference type="GO" id="GO:0010043">
    <property type="term" value="P:response to zinc ion"/>
    <property type="evidence" value="ECO:0000270"/>
    <property type="project" value="RGD"/>
</dbReference>
<dbReference type="GO" id="GO:0042554">
    <property type="term" value="P:superoxide anion generation"/>
    <property type="evidence" value="ECO:0000266"/>
    <property type="project" value="RGD"/>
</dbReference>
<dbReference type="GO" id="GO:0006801">
    <property type="term" value="P:superoxide metabolic process"/>
    <property type="evidence" value="ECO:0000250"/>
    <property type="project" value="UniProtKB"/>
</dbReference>
<dbReference type="GO" id="GO:0042311">
    <property type="term" value="P:vasodilation"/>
    <property type="evidence" value="ECO:0000266"/>
    <property type="project" value="RGD"/>
</dbReference>
<dbReference type="FunFam" id="1.10.287.990:FF:000001">
    <property type="entry name" value="Superoxide dismutase"/>
    <property type="match status" value="1"/>
</dbReference>
<dbReference type="FunFam" id="3.55.40.20:FF:000003">
    <property type="entry name" value="Superoxide dismutase [Mn], mitochondrial"/>
    <property type="match status" value="1"/>
</dbReference>
<dbReference type="Gene3D" id="1.10.287.990">
    <property type="entry name" value="Fe,Mn superoxide dismutase (SOD) domain"/>
    <property type="match status" value="1"/>
</dbReference>
<dbReference type="Gene3D" id="3.55.40.20">
    <property type="entry name" value="Iron/manganese superoxide dismutase, C-terminal domain"/>
    <property type="match status" value="1"/>
</dbReference>
<dbReference type="InterPro" id="IPR050265">
    <property type="entry name" value="Fe/Mn_Superoxide_Dismutase"/>
</dbReference>
<dbReference type="InterPro" id="IPR001189">
    <property type="entry name" value="Mn/Fe_SOD"/>
</dbReference>
<dbReference type="InterPro" id="IPR019833">
    <property type="entry name" value="Mn/Fe_SOD_BS"/>
</dbReference>
<dbReference type="InterPro" id="IPR019832">
    <property type="entry name" value="Mn/Fe_SOD_C"/>
</dbReference>
<dbReference type="InterPro" id="IPR019831">
    <property type="entry name" value="Mn/Fe_SOD_N"/>
</dbReference>
<dbReference type="InterPro" id="IPR036324">
    <property type="entry name" value="Mn/Fe_SOD_N_sf"/>
</dbReference>
<dbReference type="InterPro" id="IPR036314">
    <property type="entry name" value="SOD_C_sf"/>
</dbReference>
<dbReference type="PANTHER" id="PTHR11404">
    <property type="entry name" value="SUPEROXIDE DISMUTASE 2"/>
    <property type="match status" value="1"/>
</dbReference>
<dbReference type="PANTHER" id="PTHR11404:SF6">
    <property type="entry name" value="SUPEROXIDE DISMUTASE [MN], MITOCHONDRIAL"/>
    <property type="match status" value="1"/>
</dbReference>
<dbReference type="Pfam" id="PF02777">
    <property type="entry name" value="Sod_Fe_C"/>
    <property type="match status" value="1"/>
</dbReference>
<dbReference type="Pfam" id="PF00081">
    <property type="entry name" value="Sod_Fe_N"/>
    <property type="match status" value="1"/>
</dbReference>
<dbReference type="PIRSF" id="PIRSF000349">
    <property type="entry name" value="SODismutase"/>
    <property type="match status" value="1"/>
</dbReference>
<dbReference type="PRINTS" id="PR01703">
    <property type="entry name" value="MNSODISMTASE"/>
</dbReference>
<dbReference type="SUPFAM" id="SSF54719">
    <property type="entry name" value="Fe,Mn superoxide dismutase (SOD), C-terminal domain"/>
    <property type="match status" value="1"/>
</dbReference>
<dbReference type="SUPFAM" id="SSF46609">
    <property type="entry name" value="Fe,Mn superoxide dismutase (SOD), N-terminal domain"/>
    <property type="match status" value="1"/>
</dbReference>
<dbReference type="PROSITE" id="PS00088">
    <property type="entry name" value="SOD_MN"/>
    <property type="match status" value="1"/>
</dbReference>
<feature type="transit peptide" description="Mitochondrion">
    <location>
        <begin position="1"/>
        <end position="24"/>
    </location>
</feature>
<feature type="chain" id="PRO_0000032874" description="Superoxide dismutase [Mn], mitochondrial">
    <location>
        <begin position="25"/>
        <end position="222"/>
    </location>
</feature>
<feature type="binding site" evidence="1">
    <location>
        <position position="50"/>
    </location>
    <ligand>
        <name>Mn(2+)</name>
        <dbReference type="ChEBI" id="CHEBI:29035"/>
    </ligand>
</feature>
<feature type="binding site" evidence="1">
    <location>
        <position position="98"/>
    </location>
    <ligand>
        <name>Mn(2+)</name>
        <dbReference type="ChEBI" id="CHEBI:29035"/>
    </ligand>
</feature>
<feature type="binding site" evidence="1">
    <location>
        <position position="183"/>
    </location>
    <ligand>
        <name>Mn(2+)</name>
        <dbReference type="ChEBI" id="CHEBI:29035"/>
    </ligand>
</feature>
<feature type="binding site" evidence="1">
    <location>
        <position position="187"/>
    </location>
    <ligand>
        <name>Mn(2+)</name>
        <dbReference type="ChEBI" id="CHEBI:29035"/>
    </ligand>
</feature>
<feature type="modified residue" description="3'-nitrotyrosine" evidence="5">
    <location>
        <position position="58"/>
    </location>
</feature>
<feature type="modified residue" description="N6-acetyllysine; alternate" evidence="2">
    <location>
        <position position="68"/>
    </location>
</feature>
<feature type="modified residue" description="N6-succinyllysine; alternate" evidence="3">
    <location>
        <position position="68"/>
    </location>
</feature>
<feature type="modified residue" description="N6-acetyllysine; alternate" evidence="3">
    <location>
        <position position="75"/>
    </location>
</feature>
<feature type="modified residue" description="N6-succinyllysine; alternate" evidence="3">
    <location>
        <position position="75"/>
    </location>
</feature>
<feature type="modified residue" description="N6-acetyllysine" evidence="3">
    <location>
        <position position="114"/>
    </location>
</feature>
<feature type="modified residue" description="N6-acetyllysine; alternate" evidence="3">
    <location>
        <position position="122"/>
    </location>
</feature>
<feature type="modified residue" description="N6-succinyllysine; alternate" evidence="3">
    <location>
        <position position="122"/>
    </location>
</feature>
<feature type="modified residue" description="N6-acetyllysine; alternate" evidence="2">
    <location>
        <position position="130"/>
    </location>
</feature>
<feature type="modified residue" description="N6-succinyllysine; alternate" evidence="3">
    <location>
        <position position="130"/>
    </location>
</feature>
<feature type="modified residue" description="N6-acetyllysine" evidence="3">
    <location>
        <position position="202"/>
    </location>
</feature>
<feature type="sequence conflict" description="In Ref. 1; CAA68549." evidence="6" ref="1">
    <original>Q</original>
    <variation>H</variation>
    <location>
        <position position="167"/>
    </location>
</feature>